<feature type="chain" id="PRO_0000263292" description="Peptide chain release factor 1">
    <location>
        <begin position="1"/>
        <end position="359"/>
    </location>
</feature>
<feature type="modified residue" description="N5-methylglutamine" evidence="1">
    <location>
        <position position="232"/>
    </location>
</feature>
<reference key="1">
    <citation type="submission" date="2005-11" db="EMBL/GenBank/DDBJ databases">
        <title>The complete genome sequence of Lawsonia intracellularis: the causative agent of proliferative enteropathy.</title>
        <authorList>
            <person name="Kaur K."/>
            <person name="Zhang Q."/>
            <person name="Beckler D."/>
            <person name="Munir S."/>
            <person name="Li L."/>
            <person name="Kinsley K."/>
            <person name="Herron L."/>
            <person name="Peterson A."/>
            <person name="May B."/>
            <person name="Singh S."/>
            <person name="Gebhart C."/>
            <person name="Kapur V."/>
        </authorList>
    </citation>
    <scope>NUCLEOTIDE SEQUENCE [LARGE SCALE GENOMIC DNA]</scope>
    <source>
        <strain>PHE/MN1-00</strain>
    </source>
</reference>
<accession>Q1MSG7</accession>
<evidence type="ECO:0000255" key="1">
    <source>
        <dbReference type="HAMAP-Rule" id="MF_00093"/>
    </source>
</evidence>
<gene>
    <name evidence="1" type="primary">prfA</name>
    <name type="ordered locus">LI0002</name>
</gene>
<protein>
    <recommendedName>
        <fullName evidence="1">Peptide chain release factor 1</fullName>
        <shortName evidence="1">RF-1</shortName>
    </recommendedName>
</protein>
<sequence>MFAKLENLEQKFIEIECSLAQPNIFNDQEQYRKLTKTHSDLKPIVTTFQQFKKLQQQLSENKELISDIDPDIQEMALEEIKKLELELTHLEYELKILLLPKDPLDEKNILLEIRAGTGGEEAALFAADLFRMYCRYAEKMHWKVEIMSQSDSDTGGFKEIIALIQGDNVYSRLKFESGTHRVQRVPTTESQGRIHTSAATVAVLPEAEDVDIEIRPEELRFDVFRSSGPGGQSVNTTDSAVRVTHIPTGIVVTCQDEKSQHKNKAKALKVLSSRLLQIKQEQQEIEQADARRALVGSGDRSERIRTYNFPQGRVTDHRINLTLYSLIKVMEGEIQEFIDALSTHAQTEALKMQATQIAS</sequence>
<dbReference type="EMBL" id="AM180252">
    <property type="protein sequence ID" value="CAJ54058.1"/>
    <property type="molecule type" value="Genomic_DNA"/>
</dbReference>
<dbReference type="RefSeq" id="WP_011526085.1">
    <property type="nucleotide sequence ID" value="NC_008011.1"/>
</dbReference>
<dbReference type="SMR" id="Q1MSG7"/>
<dbReference type="STRING" id="363253.LI0002"/>
<dbReference type="KEGG" id="lip:LI0002"/>
<dbReference type="eggNOG" id="COG0216">
    <property type="taxonomic scope" value="Bacteria"/>
</dbReference>
<dbReference type="HOGENOM" id="CLU_036856_0_1_7"/>
<dbReference type="OrthoDB" id="9806673at2"/>
<dbReference type="Proteomes" id="UP000002430">
    <property type="component" value="Chromosome"/>
</dbReference>
<dbReference type="GO" id="GO:0005737">
    <property type="term" value="C:cytoplasm"/>
    <property type="evidence" value="ECO:0007669"/>
    <property type="project" value="UniProtKB-SubCell"/>
</dbReference>
<dbReference type="GO" id="GO:0016149">
    <property type="term" value="F:translation release factor activity, codon specific"/>
    <property type="evidence" value="ECO:0007669"/>
    <property type="project" value="UniProtKB-UniRule"/>
</dbReference>
<dbReference type="FunFam" id="3.30.160.20:FF:000004">
    <property type="entry name" value="Peptide chain release factor 1"/>
    <property type="match status" value="1"/>
</dbReference>
<dbReference type="FunFam" id="3.30.70.1660:FF:000002">
    <property type="entry name" value="Peptide chain release factor 1"/>
    <property type="match status" value="1"/>
</dbReference>
<dbReference type="FunFam" id="3.30.70.1660:FF:000004">
    <property type="entry name" value="Peptide chain release factor 1"/>
    <property type="match status" value="1"/>
</dbReference>
<dbReference type="Gene3D" id="3.30.160.20">
    <property type="match status" value="1"/>
</dbReference>
<dbReference type="Gene3D" id="3.30.70.1660">
    <property type="match status" value="1"/>
</dbReference>
<dbReference type="Gene3D" id="6.10.140.1950">
    <property type="match status" value="1"/>
</dbReference>
<dbReference type="HAMAP" id="MF_00093">
    <property type="entry name" value="Rel_fac_1"/>
    <property type="match status" value="1"/>
</dbReference>
<dbReference type="InterPro" id="IPR005139">
    <property type="entry name" value="PCRF"/>
</dbReference>
<dbReference type="InterPro" id="IPR000352">
    <property type="entry name" value="Pep_chain_release_fac_I"/>
</dbReference>
<dbReference type="InterPro" id="IPR045853">
    <property type="entry name" value="Pep_chain_release_fac_I_sf"/>
</dbReference>
<dbReference type="InterPro" id="IPR050057">
    <property type="entry name" value="Prokaryotic/Mito_RF"/>
</dbReference>
<dbReference type="InterPro" id="IPR004373">
    <property type="entry name" value="RF-1"/>
</dbReference>
<dbReference type="NCBIfam" id="TIGR00019">
    <property type="entry name" value="prfA"/>
    <property type="match status" value="1"/>
</dbReference>
<dbReference type="NCBIfam" id="NF001859">
    <property type="entry name" value="PRK00591.1"/>
    <property type="match status" value="1"/>
</dbReference>
<dbReference type="PANTHER" id="PTHR43804">
    <property type="entry name" value="LD18447P"/>
    <property type="match status" value="1"/>
</dbReference>
<dbReference type="PANTHER" id="PTHR43804:SF7">
    <property type="entry name" value="LD18447P"/>
    <property type="match status" value="1"/>
</dbReference>
<dbReference type="Pfam" id="PF03462">
    <property type="entry name" value="PCRF"/>
    <property type="match status" value="1"/>
</dbReference>
<dbReference type="Pfam" id="PF00472">
    <property type="entry name" value="RF-1"/>
    <property type="match status" value="1"/>
</dbReference>
<dbReference type="SMART" id="SM00937">
    <property type="entry name" value="PCRF"/>
    <property type="match status" value="1"/>
</dbReference>
<dbReference type="SUPFAM" id="SSF75620">
    <property type="entry name" value="Release factor"/>
    <property type="match status" value="1"/>
</dbReference>
<dbReference type="PROSITE" id="PS00745">
    <property type="entry name" value="RF_PROK_I"/>
    <property type="match status" value="1"/>
</dbReference>
<proteinExistence type="inferred from homology"/>
<keyword id="KW-0963">Cytoplasm</keyword>
<keyword id="KW-0488">Methylation</keyword>
<keyword id="KW-0648">Protein biosynthesis</keyword>
<keyword id="KW-1185">Reference proteome</keyword>
<comment type="function">
    <text evidence="1">Peptide chain release factor 1 directs the termination of translation in response to the peptide chain termination codons UAG and UAA.</text>
</comment>
<comment type="subcellular location">
    <subcellularLocation>
        <location evidence="1">Cytoplasm</location>
    </subcellularLocation>
</comment>
<comment type="PTM">
    <text evidence="1">Methylated by PrmC. Methylation increases the termination efficiency of RF1.</text>
</comment>
<comment type="similarity">
    <text evidence="1">Belongs to the prokaryotic/mitochondrial release factor family.</text>
</comment>
<organism>
    <name type="scientific">Lawsonia intracellularis (strain PHE/MN1-00)</name>
    <dbReference type="NCBI Taxonomy" id="363253"/>
    <lineage>
        <taxon>Bacteria</taxon>
        <taxon>Pseudomonadati</taxon>
        <taxon>Thermodesulfobacteriota</taxon>
        <taxon>Desulfovibrionia</taxon>
        <taxon>Desulfovibrionales</taxon>
        <taxon>Desulfovibrionaceae</taxon>
        <taxon>Lawsonia</taxon>
    </lineage>
</organism>
<name>RF1_LAWIP</name>